<sequence length="539" mass="57548">MAKIINFNDEARKKLEIGVNTLADAVKVTLGPRGRNVVLEKSYGAPLITNDGVTIAKEIELEDPFENMGAALVKEVAIKSNDVAGDGTTTATILAQAIVKEGLKMLSAGANPIFLKKGIELAAKEAVEVLKDKAKKIESNEEISQVASISAGDEEIGKLIAQAMAKVGETGVITVEEAKSLETTLEIVEGMQFDKGYVSPYMVTDSERMTAELDNPLILLTDKKISSMKELLPLLEQTVQMSKPVLIVADDIEGEALTTLVINKLRGTLNVVAVKAPAFGDRRKAILEDIAILTGGEVISEEKGMKLEEATIEQLGKAKTVKVTKDLTVIVDGGGQQKDISARVNSIKAQIAETTSDYDKEKLQERLAKLSGGVAVIKVGAATEVEMKDKKLRIEDALNATRAAVEEGIVAGGGTILLDIIESMKDFNETDEIAMGIEIVKRALEAPIKQIAENCGLNGGVVLEKVRMSPKGFGFDAKNEKYVNMIESGIIDPAKVTRAAIQNSTSVASLLLTTEVVIANKKEEEKAPMGAGGMMPGMM</sequence>
<evidence type="ECO:0000255" key="1">
    <source>
        <dbReference type="HAMAP-Rule" id="MF_00600"/>
    </source>
</evidence>
<feature type="chain" id="PRO_0000063378" description="Chaperonin GroEL">
    <location>
        <begin position="1"/>
        <end position="539"/>
    </location>
</feature>
<feature type="binding site" evidence="1">
    <location>
        <begin position="29"/>
        <end position="32"/>
    </location>
    <ligand>
        <name>ATP</name>
        <dbReference type="ChEBI" id="CHEBI:30616"/>
    </ligand>
</feature>
<feature type="binding site" evidence="1">
    <location>
        <begin position="86"/>
        <end position="90"/>
    </location>
    <ligand>
        <name>ATP</name>
        <dbReference type="ChEBI" id="CHEBI:30616"/>
    </ligand>
</feature>
<feature type="binding site" evidence="1">
    <location>
        <position position="413"/>
    </location>
    <ligand>
        <name>ATP</name>
        <dbReference type="ChEBI" id="CHEBI:30616"/>
    </ligand>
</feature>
<feature type="binding site" evidence="1">
    <location>
        <position position="492"/>
    </location>
    <ligand>
        <name>ATP</name>
        <dbReference type="ChEBI" id="CHEBI:30616"/>
    </ligand>
</feature>
<comment type="function">
    <text evidence="1">Together with its co-chaperonin GroES, plays an essential role in assisting protein folding. The GroEL-GroES system forms a nano-cage that allows encapsulation of the non-native substrate proteins and provides a physical environment optimized to promote and accelerate protein folding.</text>
</comment>
<comment type="catalytic activity">
    <reaction evidence="1">
        <text>ATP + H2O + a folded polypeptide = ADP + phosphate + an unfolded polypeptide.</text>
        <dbReference type="EC" id="5.6.1.7"/>
    </reaction>
</comment>
<comment type="subunit">
    <text evidence="1">Forms a cylinder of 14 subunits composed of two heptameric rings stacked back-to-back. Interacts with the co-chaperonin GroES.</text>
</comment>
<comment type="subcellular location">
    <subcellularLocation>
        <location evidence="1">Cytoplasm</location>
    </subcellularLocation>
</comment>
<comment type="similarity">
    <text evidence="1">Belongs to the chaperonin (HSP60) family.</text>
</comment>
<proteinExistence type="inferred from homology"/>
<organism>
    <name type="scientific">Fusobacterium nucleatum subsp. nucleatum (strain ATCC 25586 / DSM 15643 / BCRC 10681 / CIP 101130 / JCM 8532 / KCTC 2640 / LMG 13131 / VPI 4355)</name>
    <dbReference type="NCBI Taxonomy" id="190304"/>
    <lineage>
        <taxon>Bacteria</taxon>
        <taxon>Fusobacteriati</taxon>
        <taxon>Fusobacteriota</taxon>
        <taxon>Fusobacteriia</taxon>
        <taxon>Fusobacteriales</taxon>
        <taxon>Fusobacteriaceae</taxon>
        <taxon>Fusobacterium</taxon>
    </lineage>
</organism>
<dbReference type="EC" id="5.6.1.7" evidence="1"/>
<dbReference type="EMBL" id="AE009951">
    <property type="protein sequence ID" value="AAL94871.1"/>
    <property type="molecule type" value="Genomic_DNA"/>
</dbReference>
<dbReference type="RefSeq" id="NP_603572.1">
    <property type="nucleotide sequence ID" value="NC_003454.1"/>
</dbReference>
<dbReference type="RefSeq" id="WP_011016573.1">
    <property type="nucleotide sequence ID" value="NZ_OZ209243.1"/>
</dbReference>
<dbReference type="SMR" id="Q8R5X7"/>
<dbReference type="FunCoup" id="Q8R5X7">
    <property type="interactions" value="363"/>
</dbReference>
<dbReference type="STRING" id="190304.FN0675"/>
<dbReference type="PaxDb" id="190304-FN0675"/>
<dbReference type="EnsemblBacteria" id="AAL94871">
    <property type="protein sequence ID" value="AAL94871"/>
    <property type="gene ID" value="FN0675"/>
</dbReference>
<dbReference type="GeneID" id="79783672"/>
<dbReference type="KEGG" id="fnu:FN0675"/>
<dbReference type="PATRIC" id="fig|190304.8.peg.1240"/>
<dbReference type="eggNOG" id="COG0459">
    <property type="taxonomic scope" value="Bacteria"/>
</dbReference>
<dbReference type="HOGENOM" id="CLU_016503_3_0_0"/>
<dbReference type="InParanoid" id="Q8R5X7"/>
<dbReference type="BioCyc" id="FNUC190304:G1FZS-1261-MONOMER"/>
<dbReference type="Proteomes" id="UP000002521">
    <property type="component" value="Chromosome"/>
</dbReference>
<dbReference type="GO" id="GO:1990220">
    <property type="term" value="C:GroEL-GroES complex"/>
    <property type="evidence" value="ECO:0000318"/>
    <property type="project" value="GO_Central"/>
</dbReference>
<dbReference type="GO" id="GO:0005524">
    <property type="term" value="F:ATP binding"/>
    <property type="evidence" value="ECO:0000318"/>
    <property type="project" value="GO_Central"/>
</dbReference>
<dbReference type="GO" id="GO:0140662">
    <property type="term" value="F:ATP-dependent protein folding chaperone"/>
    <property type="evidence" value="ECO:0007669"/>
    <property type="project" value="InterPro"/>
</dbReference>
<dbReference type="GO" id="GO:0016853">
    <property type="term" value="F:isomerase activity"/>
    <property type="evidence" value="ECO:0007669"/>
    <property type="project" value="UniProtKB-KW"/>
</dbReference>
<dbReference type="GO" id="GO:0051082">
    <property type="term" value="F:unfolded protein binding"/>
    <property type="evidence" value="ECO:0000318"/>
    <property type="project" value="GO_Central"/>
</dbReference>
<dbReference type="GO" id="GO:0051085">
    <property type="term" value="P:chaperone cofactor-dependent protein refolding"/>
    <property type="evidence" value="ECO:0000318"/>
    <property type="project" value="GO_Central"/>
</dbReference>
<dbReference type="GO" id="GO:0042026">
    <property type="term" value="P:protein refolding"/>
    <property type="evidence" value="ECO:0007669"/>
    <property type="project" value="UniProtKB-UniRule"/>
</dbReference>
<dbReference type="GO" id="GO:0009408">
    <property type="term" value="P:response to heat"/>
    <property type="evidence" value="ECO:0000318"/>
    <property type="project" value="GO_Central"/>
</dbReference>
<dbReference type="CDD" id="cd03344">
    <property type="entry name" value="GroEL"/>
    <property type="match status" value="1"/>
</dbReference>
<dbReference type="FunFam" id="3.50.7.10:FF:000001">
    <property type="entry name" value="60 kDa chaperonin"/>
    <property type="match status" value="1"/>
</dbReference>
<dbReference type="Gene3D" id="3.50.7.10">
    <property type="entry name" value="GroEL"/>
    <property type="match status" value="1"/>
</dbReference>
<dbReference type="Gene3D" id="1.10.560.10">
    <property type="entry name" value="GroEL-like equatorial domain"/>
    <property type="match status" value="1"/>
</dbReference>
<dbReference type="Gene3D" id="3.30.260.10">
    <property type="entry name" value="TCP-1-like chaperonin intermediate domain"/>
    <property type="match status" value="1"/>
</dbReference>
<dbReference type="HAMAP" id="MF_00600">
    <property type="entry name" value="CH60"/>
    <property type="match status" value="1"/>
</dbReference>
<dbReference type="InterPro" id="IPR018370">
    <property type="entry name" value="Chaperonin_Cpn60_CS"/>
</dbReference>
<dbReference type="InterPro" id="IPR001844">
    <property type="entry name" value="Cpn60/GroEL"/>
</dbReference>
<dbReference type="InterPro" id="IPR002423">
    <property type="entry name" value="Cpn60/GroEL/TCP-1"/>
</dbReference>
<dbReference type="InterPro" id="IPR027409">
    <property type="entry name" value="GroEL-like_apical_dom_sf"/>
</dbReference>
<dbReference type="InterPro" id="IPR027413">
    <property type="entry name" value="GROEL-like_equatorial_sf"/>
</dbReference>
<dbReference type="InterPro" id="IPR027410">
    <property type="entry name" value="TCP-1-like_intermed_sf"/>
</dbReference>
<dbReference type="NCBIfam" id="TIGR02348">
    <property type="entry name" value="GroEL"/>
    <property type="match status" value="1"/>
</dbReference>
<dbReference type="NCBIfam" id="NF000592">
    <property type="entry name" value="PRK00013.1"/>
    <property type="match status" value="1"/>
</dbReference>
<dbReference type="NCBIfam" id="NF009487">
    <property type="entry name" value="PRK12849.1"/>
    <property type="match status" value="1"/>
</dbReference>
<dbReference type="NCBIfam" id="NF009488">
    <property type="entry name" value="PRK12850.1"/>
    <property type="match status" value="1"/>
</dbReference>
<dbReference type="NCBIfam" id="NF009489">
    <property type="entry name" value="PRK12851.1"/>
    <property type="match status" value="1"/>
</dbReference>
<dbReference type="PANTHER" id="PTHR45633">
    <property type="entry name" value="60 KDA HEAT SHOCK PROTEIN, MITOCHONDRIAL"/>
    <property type="match status" value="1"/>
</dbReference>
<dbReference type="Pfam" id="PF00118">
    <property type="entry name" value="Cpn60_TCP1"/>
    <property type="match status" value="1"/>
</dbReference>
<dbReference type="PRINTS" id="PR00298">
    <property type="entry name" value="CHAPERONIN60"/>
</dbReference>
<dbReference type="SUPFAM" id="SSF52029">
    <property type="entry name" value="GroEL apical domain-like"/>
    <property type="match status" value="1"/>
</dbReference>
<dbReference type="SUPFAM" id="SSF48592">
    <property type="entry name" value="GroEL equatorial domain-like"/>
    <property type="match status" value="1"/>
</dbReference>
<dbReference type="SUPFAM" id="SSF54849">
    <property type="entry name" value="GroEL-intermediate domain like"/>
    <property type="match status" value="1"/>
</dbReference>
<dbReference type="PROSITE" id="PS00296">
    <property type="entry name" value="CHAPERONINS_CPN60"/>
    <property type="match status" value="1"/>
</dbReference>
<keyword id="KW-0067">ATP-binding</keyword>
<keyword id="KW-0143">Chaperone</keyword>
<keyword id="KW-0963">Cytoplasm</keyword>
<keyword id="KW-0413">Isomerase</keyword>
<keyword id="KW-0547">Nucleotide-binding</keyword>
<keyword id="KW-1185">Reference proteome</keyword>
<name>CH60_FUSNN</name>
<reference key="1">
    <citation type="journal article" date="2002" name="J. Bacteriol.">
        <title>Genome sequence and analysis of the oral bacterium Fusobacterium nucleatum strain ATCC 25586.</title>
        <authorList>
            <person name="Kapatral V."/>
            <person name="Anderson I."/>
            <person name="Ivanova N."/>
            <person name="Reznik G."/>
            <person name="Los T."/>
            <person name="Lykidis A."/>
            <person name="Bhattacharyya A."/>
            <person name="Bartman A."/>
            <person name="Gardner W."/>
            <person name="Grechkin G."/>
            <person name="Zhu L."/>
            <person name="Vasieva O."/>
            <person name="Chu L."/>
            <person name="Kogan Y."/>
            <person name="Chaga O."/>
            <person name="Goltsman E."/>
            <person name="Bernal A."/>
            <person name="Larsen N."/>
            <person name="D'Souza M."/>
            <person name="Walunas T."/>
            <person name="Pusch G."/>
            <person name="Haselkorn R."/>
            <person name="Fonstein M."/>
            <person name="Kyrpides N.C."/>
            <person name="Overbeek R."/>
        </authorList>
    </citation>
    <scope>NUCLEOTIDE SEQUENCE [LARGE SCALE GENOMIC DNA]</scope>
    <source>
        <strain>ATCC 25586 / DSM 15643 / BCRC 10681 / CIP 101130 / JCM 8532 / KCTC 2640 / LMG 13131 / VPI 4355</strain>
    </source>
</reference>
<gene>
    <name evidence="1" type="primary">groEL</name>
    <name evidence="1" type="synonym">groL</name>
    <name type="ordered locus">FN0675</name>
</gene>
<protein>
    <recommendedName>
        <fullName evidence="1">Chaperonin GroEL</fullName>
        <ecNumber evidence="1">5.6.1.7</ecNumber>
    </recommendedName>
    <alternativeName>
        <fullName evidence="1">60 kDa chaperonin</fullName>
    </alternativeName>
    <alternativeName>
        <fullName evidence="1">Chaperonin-60</fullName>
        <shortName evidence="1">Cpn60</shortName>
    </alternativeName>
</protein>
<accession>Q8R5X7</accession>